<name>SLRL2_ORYSJ</name>
<gene>
    <name evidence="6" type="primary">SLRL2</name>
    <name evidence="10" type="ordered locus">Os05g0574900</name>
    <name evidence="8" type="ordered locus">LOC_Os05g49930</name>
    <name evidence="9" type="ORF">OJ1268_B08.12</name>
</gene>
<keyword id="KW-0939">Gibberellin signaling pathway</keyword>
<keyword id="KW-0539">Nucleus</keyword>
<keyword id="KW-1185">Reference proteome</keyword>
<keyword id="KW-0678">Repressor</keyword>
<keyword id="KW-0804">Transcription</keyword>
<keyword id="KW-0805">Transcription regulation</keyword>
<feature type="chain" id="PRO_0000455646" description="Protein SLENDER RICE1-LIKE 2">
    <location>
        <begin position="1"/>
        <end position="500"/>
    </location>
</feature>
<feature type="domain" description="GRAS" evidence="2">
    <location>
        <begin position="68"/>
        <end position="454"/>
    </location>
</feature>
<feature type="region of interest" description="Leucine repeat I (LRI)" evidence="2">
    <location>
        <begin position="75"/>
        <end position="135"/>
    </location>
</feature>
<feature type="region of interest" description="VHIID" evidence="2">
    <location>
        <begin position="154"/>
        <end position="219"/>
    </location>
</feature>
<feature type="region of interest" description="Leucine repeat II (LRII)" evidence="2">
    <location>
        <begin position="233"/>
        <end position="265"/>
    </location>
</feature>
<feature type="region of interest" description="PFYRE" evidence="2">
    <location>
        <begin position="275"/>
        <end position="376"/>
    </location>
</feature>
<feature type="region of interest" description="SAW" evidence="2">
    <location>
        <begin position="379"/>
        <end position="454"/>
    </location>
</feature>
<feature type="region of interest" description="Disordered" evidence="3">
    <location>
        <begin position="466"/>
        <end position="500"/>
    </location>
</feature>
<feature type="short sequence motif" description="VHIID" evidence="2">
    <location>
        <begin position="185"/>
        <end position="189"/>
    </location>
</feature>
<feature type="short sequence motif" description="LXXLL motif" evidence="2">
    <location>
        <begin position="283"/>
        <end position="287"/>
    </location>
</feature>
<feature type="compositionally biased region" description="Gly residues" evidence="3">
    <location>
        <begin position="481"/>
        <end position="493"/>
    </location>
</feature>
<evidence type="ECO:0000250" key="1">
    <source>
        <dbReference type="UniProtKB" id="Q7G7J6"/>
    </source>
</evidence>
<evidence type="ECO:0000255" key="2">
    <source>
        <dbReference type="PROSITE-ProRule" id="PRU01191"/>
    </source>
</evidence>
<evidence type="ECO:0000256" key="3">
    <source>
        <dbReference type="SAM" id="MobiDB-lite"/>
    </source>
</evidence>
<evidence type="ECO:0000269" key="4">
    <source>
    </source>
</evidence>
<evidence type="ECO:0000269" key="5">
    <source>
    </source>
</evidence>
<evidence type="ECO:0000303" key="6">
    <source>
    </source>
</evidence>
<evidence type="ECO:0000303" key="7">
    <source>
    </source>
</evidence>
<evidence type="ECO:0000305" key="8"/>
<evidence type="ECO:0000312" key="9">
    <source>
        <dbReference type="EMBL" id="AAT69589.1"/>
    </source>
</evidence>
<evidence type="ECO:0000312" key="10">
    <source>
        <dbReference type="EMBL" id="BAS95467.1"/>
    </source>
</evidence>
<reference key="1">
    <citation type="journal article" date="2005" name="Mol. Genet. Genomics">
        <title>A fine physical map of the rice chromosome 5.</title>
        <authorList>
            <person name="Cheng C.-H."/>
            <person name="Chung M.C."/>
            <person name="Liu S.-M."/>
            <person name="Chen S.-K."/>
            <person name="Kao F.Y."/>
            <person name="Lin S.-J."/>
            <person name="Hsiao S.-H."/>
            <person name="Tseng I.C."/>
            <person name="Hsing Y.-I.C."/>
            <person name="Wu H.-P."/>
            <person name="Chen C.-S."/>
            <person name="Shaw J.-F."/>
            <person name="Wu J."/>
            <person name="Matsumoto T."/>
            <person name="Sasaki T."/>
            <person name="Chen H.-C."/>
            <person name="Chow T.-Y."/>
        </authorList>
    </citation>
    <scope>NUCLEOTIDE SEQUENCE [LARGE SCALE GENOMIC DNA]</scope>
    <source>
        <strain>cv. Nipponbare</strain>
    </source>
</reference>
<reference key="2">
    <citation type="journal article" date="2005" name="Nature">
        <title>The map-based sequence of the rice genome.</title>
        <authorList>
            <consortium name="International rice genome sequencing project (IRGSP)"/>
        </authorList>
    </citation>
    <scope>NUCLEOTIDE SEQUENCE [LARGE SCALE GENOMIC DNA]</scope>
    <source>
        <strain>cv. Nipponbare</strain>
    </source>
</reference>
<reference key="3">
    <citation type="journal article" date="2008" name="Nucleic Acids Res.">
        <title>The rice annotation project database (RAP-DB): 2008 update.</title>
        <authorList>
            <consortium name="The rice annotation project (RAP)"/>
        </authorList>
    </citation>
    <scope>GENOME REANNOTATION</scope>
    <source>
        <strain>cv. Nipponbare</strain>
    </source>
</reference>
<reference key="4">
    <citation type="journal article" date="2013" name="Rice">
        <title>Improvement of the Oryza sativa Nipponbare reference genome using next generation sequence and optical map data.</title>
        <authorList>
            <person name="Kawahara Y."/>
            <person name="de la Bastide M."/>
            <person name="Hamilton J.P."/>
            <person name="Kanamori H."/>
            <person name="McCombie W.R."/>
            <person name="Ouyang S."/>
            <person name="Schwartz D.C."/>
            <person name="Tanaka T."/>
            <person name="Wu J."/>
            <person name="Zhou S."/>
            <person name="Childs K.L."/>
            <person name="Davidson R.M."/>
            <person name="Lin H."/>
            <person name="Quesada-Ocampo L."/>
            <person name="Vaillancourt B."/>
            <person name="Sakai H."/>
            <person name="Lee S.S."/>
            <person name="Kim J."/>
            <person name="Numa H."/>
            <person name="Itoh T."/>
            <person name="Buell C.R."/>
            <person name="Matsumoto T."/>
        </authorList>
    </citation>
    <scope>GENOME REANNOTATION</scope>
    <source>
        <strain>cv. Nipponbare</strain>
    </source>
</reference>
<reference key="5">
    <citation type="journal article" date="2003" name="Science">
        <title>Collection, mapping, and annotation of over 28,000 cDNA clones from japonica rice.</title>
        <authorList>
            <consortium name="The rice full-length cDNA consortium"/>
        </authorList>
    </citation>
    <scope>NUCLEOTIDE SEQUENCE [LARGE SCALE MRNA]</scope>
    <source>
        <strain>cv. Nipponbare</strain>
    </source>
</reference>
<reference key="6">
    <citation type="journal article" date="2005" name="Plant J.">
        <title>Overexpression of a GRAS protein lacking the DELLA domain confers altered gibberellin responses in rice.</title>
        <authorList>
            <person name="Itoh H."/>
            <person name="Shimada A."/>
            <person name="Ueguchi-Tanaka M."/>
            <person name="Kamiya N."/>
            <person name="Hasegawa Y."/>
            <person name="Ashikari M."/>
            <person name="Matsuoka M."/>
        </authorList>
    </citation>
    <scope>TISSUE SPECIFICITY</scope>
</reference>
<reference key="7">
    <citation type="journal article" date="2007" name="Biochem. Biophys. Res. Commun.">
        <title>Overproduction of OsSLRL2 alters the development of transgenic Arabidopsis plants.</title>
        <authorList>
            <person name="Liu T."/>
            <person name="Gu J.Y."/>
            <person name="Xu C.J."/>
            <person name="Gao Y."/>
            <person name="An C.C."/>
        </authorList>
    </citation>
    <scope>FUNCTION</scope>
    <scope>TISSUE SPECIFICITY</scope>
    <scope>INDUCTION BY GIBBERELLIN</scope>
</reference>
<comment type="function">
    <text evidence="5">Probable transcriptional regulator that acts as a repressor of the gibberellin (GA) signaling pathway (PubMed:17521606). Its repressive activity is weaker than that of SLR1 (PubMed:17521606). Its overexpression prevents the GA signaling pathway and induces a dwarf phenotype in Arabidopsis thaliana plants (PubMed:17521606).</text>
</comment>
<comment type="subcellular location">
    <subcellularLocation>
        <location evidence="1">Nucleus</location>
    </subcellularLocation>
</comment>
<comment type="tissue specificity">
    <text evidence="4 5">Expressed at low levels in leaf blades, leaf sheaths, rachis and flowers (PubMed:16262715). Expressed in the embryo of immature seeds (PubMed:17521606).</text>
</comment>
<comment type="induction">
    <text evidence="5">Induced by treatment with gibberellin (GA3).</text>
</comment>
<comment type="similarity">
    <text evidence="2">Belongs to the GRAS family.</text>
</comment>
<accession>Q6F368</accession>
<accession>Q0DFR5</accession>
<sequence>MAQFGGFGGWSAMDVAAAAAAALGNVSGAVYHADPAAAVYASLVPGMAVVPGRAPPSAVQIEAARRWKELEKMALRSVNLMVTCAGAIQAGDYAAAAGSLSDAREIFAKMPTTRTGIGRVLTHFADALAERLFPAFPQSAPPPPPPRGEQRELFRGFYEAGPYLKFAHLAANQAILEAFEGCNSVHVIDFALTDGIQWPSLIQALAVRPGGPPFLRITGIGPHAAGNRDELRDVGLRLAEFARSCSVPFAFRGIAADQLDGLRPWMFQVAPGEAVAINSVLQLHRLLVDQDAAAAASFPAPIDGVLDWVASMNPRVFTVVEQEADHNKSSLLERFTNSLFYYASMFDSLEAISRHGGGDGAGNPLAEAYLQGEIADIVSREGSSRVERHEQMPRWVERLRRGGMTQLPLGATGLWQAAMQLREFSGAGFGVQENGGFLTLTWHSQRLYSASAWRATAGKKMTMMASGAADAMEESQNSNTNGGGGGSSGGGHGALNQIMQ</sequence>
<proteinExistence type="evidence at transcript level"/>
<dbReference type="EMBL" id="AC098832">
    <property type="protein sequence ID" value="AAT69589.1"/>
    <property type="molecule type" value="Genomic_DNA"/>
</dbReference>
<dbReference type="EMBL" id="AP008211">
    <property type="protein sequence ID" value="BAF18308.1"/>
    <property type="molecule type" value="Genomic_DNA"/>
</dbReference>
<dbReference type="EMBL" id="AP014961">
    <property type="protein sequence ID" value="BAS95467.1"/>
    <property type="molecule type" value="Genomic_DNA"/>
</dbReference>
<dbReference type="EMBL" id="AK107256">
    <property type="protein sequence ID" value="BAG98012.1"/>
    <property type="molecule type" value="mRNA"/>
</dbReference>
<dbReference type="SMR" id="Q6F368"/>
<dbReference type="FunCoup" id="Q6F368">
    <property type="interactions" value="126"/>
</dbReference>
<dbReference type="STRING" id="39947.Q6F368"/>
<dbReference type="PaxDb" id="39947-Q6F368"/>
<dbReference type="EnsemblPlants" id="Os05t0574900-01">
    <property type="protein sequence ID" value="Os05t0574900-01"/>
    <property type="gene ID" value="Os05g0574900"/>
</dbReference>
<dbReference type="Gramene" id="Os05t0574900-01">
    <property type="protein sequence ID" value="Os05t0574900-01"/>
    <property type="gene ID" value="Os05g0574900"/>
</dbReference>
<dbReference type="KEGG" id="dosa:Os05g0574900"/>
<dbReference type="KEGG" id="osa:4339687"/>
<dbReference type="eggNOG" id="ENOG502QPMG">
    <property type="taxonomic scope" value="Eukaryota"/>
</dbReference>
<dbReference type="HOGENOM" id="CLU_011924_0_3_1"/>
<dbReference type="InParanoid" id="Q6F368"/>
<dbReference type="OMA" id="CARLWRM"/>
<dbReference type="OrthoDB" id="631113at2759"/>
<dbReference type="Proteomes" id="UP000000763">
    <property type="component" value="Chromosome 5"/>
</dbReference>
<dbReference type="Proteomes" id="UP000059680">
    <property type="component" value="Chromosome 5"/>
</dbReference>
<dbReference type="GO" id="GO:0005634">
    <property type="term" value="C:nucleus"/>
    <property type="evidence" value="ECO:0000318"/>
    <property type="project" value="GO_Central"/>
</dbReference>
<dbReference type="GO" id="GO:0003700">
    <property type="term" value="F:DNA-binding transcription factor activity"/>
    <property type="evidence" value="ECO:0000318"/>
    <property type="project" value="GO_Central"/>
</dbReference>
<dbReference type="GO" id="GO:0043565">
    <property type="term" value="F:sequence-specific DNA binding"/>
    <property type="evidence" value="ECO:0000318"/>
    <property type="project" value="GO_Central"/>
</dbReference>
<dbReference type="GO" id="GO:0009740">
    <property type="term" value="P:gibberellic acid mediated signaling pathway"/>
    <property type="evidence" value="ECO:0000315"/>
    <property type="project" value="UniProtKB"/>
</dbReference>
<dbReference type="GO" id="GO:0006355">
    <property type="term" value="P:regulation of DNA-templated transcription"/>
    <property type="evidence" value="ECO:0000318"/>
    <property type="project" value="GO_Central"/>
</dbReference>
<dbReference type="InterPro" id="IPR005202">
    <property type="entry name" value="TF_GRAS"/>
</dbReference>
<dbReference type="PANTHER" id="PTHR31636">
    <property type="entry name" value="OSJNBA0084A10.13 PROTEIN-RELATED"/>
    <property type="match status" value="1"/>
</dbReference>
<dbReference type="Pfam" id="PF03514">
    <property type="entry name" value="GRAS"/>
    <property type="match status" value="1"/>
</dbReference>
<dbReference type="PROSITE" id="PS50985">
    <property type="entry name" value="GRAS"/>
    <property type="match status" value="1"/>
</dbReference>
<protein>
    <recommendedName>
        <fullName evidence="6">Protein SLENDER RICE1-LIKE 2</fullName>
        <shortName evidence="7">OsSLRL2</shortName>
        <shortName evidence="6">Protein SLR1-LIKE 2</shortName>
    </recommendedName>
</protein>
<organism>
    <name type="scientific">Oryza sativa subsp. japonica</name>
    <name type="common">Rice</name>
    <dbReference type="NCBI Taxonomy" id="39947"/>
    <lineage>
        <taxon>Eukaryota</taxon>
        <taxon>Viridiplantae</taxon>
        <taxon>Streptophyta</taxon>
        <taxon>Embryophyta</taxon>
        <taxon>Tracheophyta</taxon>
        <taxon>Spermatophyta</taxon>
        <taxon>Magnoliopsida</taxon>
        <taxon>Liliopsida</taxon>
        <taxon>Poales</taxon>
        <taxon>Poaceae</taxon>
        <taxon>BOP clade</taxon>
        <taxon>Oryzoideae</taxon>
        <taxon>Oryzeae</taxon>
        <taxon>Oryzinae</taxon>
        <taxon>Oryza</taxon>
        <taxon>Oryza sativa</taxon>
    </lineage>
</organism>